<comment type="function">
    <text evidence="1">Catalyzes the condensation of pantoate with beta-alanine in an ATP-dependent reaction via a pantoyl-adenylate intermediate.</text>
</comment>
<comment type="catalytic activity">
    <reaction evidence="1">
        <text>(R)-pantoate + beta-alanine + ATP = (R)-pantothenate + AMP + diphosphate + H(+)</text>
        <dbReference type="Rhea" id="RHEA:10912"/>
        <dbReference type="ChEBI" id="CHEBI:15378"/>
        <dbReference type="ChEBI" id="CHEBI:15980"/>
        <dbReference type="ChEBI" id="CHEBI:29032"/>
        <dbReference type="ChEBI" id="CHEBI:30616"/>
        <dbReference type="ChEBI" id="CHEBI:33019"/>
        <dbReference type="ChEBI" id="CHEBI:57966"/>
        <dbReference type="ChEBI" id="CHEBI:456215"/>
        <dbReference type="EC" id="6.3.2.1"/>
    </reaction>
</comment>
<comment type="pathway">
    <text evidence="1">Cofactor biosynthesis; (R)-pantothenate biosynthesis; (R)-pantothenate from (R)-pantoate and beta-alanine: step 1/1.</text>
</comment>
<comment type="subunit">
    <text evidence="1">Homodimer.</text>
</comment>
<comment type="subcellular location">
    <subcellularLocation>
        <location evidence="1">Cytoplasm</location>
    </subcellularLocation>
</comment>
<comment type="miscellaneous">
    <text evidence="1">The reaction proceeds by a bi uni uni bi ping pong mechanism.</text>
</comment>
<comment type="similarity">
    <text evidence="1">Belongs to the pantothenate synthetase family.</text>
</comment>
<name>PANC_MYCSJ</name>
<gene>
    <name evidence="1" type="primary">panC</name>
    <name type="ordered locus">Mjls_5148</name>
</gene>
<evidence type="ECO:0000255" key="1">
    <source>
        <dbReference type="HAMAP-Rule" id="MF_00158"/>
    </source>
</evidence>
<proteinExistence type="inferred from homology"/>
<accession>A3Q6Y5</accession>
<keyword id="KW-0067">ATP-binding</keyword>
<keyword id="KW-0963">Cytoplasm</keyword>
<keyword id="KW-0436">Ligase</keyword>
<keyword id="KW-0547">Nucleotide-binding</keyword>
<keyword id="KW-0566">Pantothenate biosynthesis</keyword>
<dbReference type="EC" id="6.3.2.1" evidence="1"/>
<dbReference type="EMBL" id="CP000580">
    <property type="protein sequence ID" value="ABO00913.1"/>
    <property type="molecule type" value="Genomic_DNA"/>
</dbReference>
<dbReference type="SMR" id="A3Q6Y5"/>
<dbReference type="KEGG" id="mjl:Mjls_5148"/>
<dbReference type="HOGENOM" id="CLU_047148_0_1_11"/>
<dbReference type="BioCyc" id="MSP164757:G1G8C-5198-MONOMER"/>
<dbReference type="UniPathway" id="UPA00028">
    <property type="reaction ID" value="UER00005"/>
</dbReference>
<dbReference type="GO" id="GO:0005829">
    <property type="term" value="C:cytosol"/>
    <property type="evidence" value="ECO:0007669"/>
    <property type="project" value="TreeGrafter"/>
</dbReference>
<dbReference type="GO" id="GO:0005524">
    <property type="term" value="F:ATP binding"/>
    <property type="evidence" value="ECO:0007669"/>
    <property type="project" value="UniProtKB-KW"/>
</dbReference>
<dbReference type="GO" id="GO:0004592">
    <property type="term" value="F:pantoate-beta-alanine ligase activity"/>
    <property type="evidence" value="ECO:0007669"/>
    <property type="project" value="UniProtKB-UniRule"/>
</dbReference>
<dbReference type="GO" id="GO:0015940">
    <property type="term" value="P:pantothenate biosynthetic process"/>
    <property type="evidence" value="ECO:0007669"/>
    <property type="project" value="UniProtKB-UniRule"/>
</dbReference>
<dbReference type="CDD" id="cd00560">
    <property type="entry name" value="PanC"/>
    <property type="match status" value="1"/>
</dbReference>
<dbReference type="FunFam" id="3.40.50.620:FF:000114">
    <property type="entry name" value="Pantothenate synthetase"/>
    <property type="match status" value="1"/>
</dbReference>
<dbReference type="Gene3D" id="3.40.50.620">
    <property type="entry name" value="HUPs"/>
    <property type="match status" value="1"/>
</dbReference>
<dbReference type="Gene3D" id="3.30.1300.10">
    <property type="entry name" value="Pantoate-beta-alanine ligase, C-terminal domain"/>
    <property type="match status" value="1"/>
</dbReference>
<dbReference type="HAMAP" id="MF_00158">
    <property type="entry name" value="PanC"/>
    <property type="match status" value="1"/>
</dbReference>
<dbReference type="InterPro" id="IPR003721">
    <property type="entry name" value="Pantoate_ligase"/>
</dbReference>
<dbReference type="InterPro" id="IPR042176">
    <property type="entry name" value="Pantoate_ligase_C"/>
</dbReference>
<dbReference type="InterPro" id="IPR014729">
    <property type="entry name" value="Rossmann-like_a/b/a_fold"/>
</dbReference>
<dbReference type="NCBIfam" id="TIGR00018">
    <property type="entry name" value="panC"/>
    <property type="match status" value="1"/>
</dbReference>
<dbReference type="PANTHER" id="PTHR21299">
    <property type="entry name" value="CYTIDYLATE KINASE/PANTOATE-BETA-ALANINE LIGASE"/>
    <property type="match status" value="1"/>
</dbReference>
<dbReference type="PANTHER" id="PTHR21299:SF1">
    <property type="entry name" value="PANTOATE--BETA-ALANINE LIGASE"/>
    <property type="match status" value="1"/>
</dbReference>
<dbReference type="Pfam" id="PF02569">
    <property type="entry name" value="Pantoate_ligase"/>
    <property type="match status" value="1"/>
</dbReference>
<dbReference type="SUPFAM" id="SSF52374">
    <property type="entry name" value="Nucleotidylyl transferase"/>
    <property type="match status" value="1"/>
</dbReference>
<organism>
    <name type="scientific">Mycobacterium sp. (strain JLS)</name>
    <dbReference type="NCBI Taxonomy" id="164757"/>
    <lineage>
        <taxon>Bacteria</taxon>
        <taxon>Bacillati</taxon>
        <taxon>Actinomycetota</taxon>
        <taxon>Actinomycetes</taxon>
        <taxon>Mycobacteriales</taxon>
        <taxon>Mycobacteriaceae</taxon>
        <taxon>Mycobacterium</taxon>
    </lineage>
</organism>
<feature type="chain" id="PRO_0000305488" description="Pantothenate synthetase">
    <location>
        <begin position="1"/>
        <end position="313"/>
    </location>
</feature>
<feature type="active site" description="Proton donor" evidence="1">
    <location>
        <position position="50"/>
    </location>
</feature>
<feature type="binding site" evidence="1">
    <location>
        <begin position="43"/>
        <end position="50"/>
    </location>
    <ligand>
        <name>ATP</name>
        <dbReference type="ChEBI" id="CHEBI:30616"/>
    </ligand>
</feature>
<feature type="binding site" evidence="1">
    <location>
        <position position="75"/>
    </location>
    <ligand>
        <name>(R)-pantoate</name>
        <dbReference type="ChEBI" id="CHEBI:15980"/>
    </ligand>
</feature>
<feature type="binding site" evidence="1">
    <location>
        <position position="75"/>
    </location>
    <ligand>
        <name>beta-alanine</name>
        <dbReference type="ChEBI" id="CHEBI:57966"/>
    </ligand>
</feature>
<feature type="binding site" evidence="1">
    <location>
        <begin position="161"/>
        <end position="164"/>
    </location>
    <ligand>
        <name>ATP</name>
        <dbReference type="ChEBI" id="CHEBI:30616"/>
    </ligand>
</feature>
<feature type="binding site" evidence="1">
    <location>
        <position position="167"/>
    </location>
    <ligand>
        <name>(R)-pantoate</name>
        <dbReference type="ChEBI" id="CHEBI:15980"/>
    </ligand>
</feature>
<feature type="binding site" evidence="1">
    <location>
        <position position="190"/>
    </location>
    <ligand>
        <name>ATP</name>
        <dbReference type="ChEBI" id="CHEBI:30616"/>
    </ligand>
</feature>
<feature type="binding site" evidence="1">
    <location>
        <begin position="198"/>
        <end position="201"/>
    </location>
    <ligand>
        <name>ATP</name>
        <dbReference type="ChEBI" id="CHEBI:30616"/>
    </ligand>
</feature>
<protein>
    <recommendedName>
        <fullName evidence="1">Pantothenate synthetase</fullName>
        <shortName evidence="1">PS</shortName>
        <ecNumber evidence="1">6.3.2.1</ecNumber>
    </recommendedName>
    <alternativeName>
        <fullName evidence="1">Pantoate--beta-alanine ligase</fullName>
    </alternativeName>
    <alternativeName>
        <fullName evidence="1">Pantoate-activating enzyme</fullName>
    </alternativeName>
</protein>
<reference key="1">
    <citation type="submission" date="2007-02" db="EMBL/GenBank/DDBJ databases">
        <title>Complete sequence of Mycobacterium sp. JLS.</title>
        <authorList>
            <consortium name="US DOE Joint Genome Institute"/>
            <person name="Copeland A."/>
            <person name="Lucas S."/>
            <person name="Lapidus A."/>
            <person name="Barry K."/>
            <person name="Detter J.C."/>
            <person name="Glavina del Rio T."/>
            <person name="Hammon N."/>
            <person name="Israni S."/>
            <person name="Dalin E."/>
            <person name="Tice H."/>
            <person name="Pitluck S."/>
            <person name="Chain P."/>
            <person name="Malfatti S."/>
            <person name="Shin M."/>
            <person name="Vergez L."/>
            <person name="Schmutz J."/>
            <person name="Larimer F."/>
            <person name="Land M."/>
            <person name="Hauser L."/>
            <person name="Kyrpides N."/>
            <person name="Mikhailova N."/>
            <person name="Miller C.D."/>
            <person name="Anderson A.J."/>
            <person name="Sims R.C."/>
            <person name="Richardson P."/>
        </authorList>
    </citation>
    <scope>NUCLEOTIDE SEQUENCE [LARGE SCALE GENOMIC DNA]</scope>
    <source>
        <strain>JLS</strain>
    </source>
</reference>
<sequence>MTARRPTRFAKGELNVYRAPRDVTDVTRALRSTGRRVVLVPTMGALHEGHLTLIRAAKRVQGAVVVVSIFVNPLQFGAGEDLDAYPRTLDDDLAALRAEGVEIAFTPTVGDMYPYGTRTSVHPGPLGDDLEGASRPGHFAGVLTVVCKLLHIVRPDRAFFGEKDYQQLVLIRQMVTDLNIDTRIVGVPTVREADGLALSSRNRYLDEVEREQAGALSAALLAGMYAASNGAAATLDAARAVLDEVPAIEVDYLQVRDPMLGPVPHEGAARLLVAARLGQTRLLDNIAVDIGASDGIDGHPRVGSPDHQLPWRN</sequence>